<proteinExistence type="inferred from homology"/>
<dbReference type="EC" id="7.1.1.9"/>
<dbReference type="EMBL" id="M64914">
    <property type="protein sequence ID" value="AAB01478.1"/>
    <property type="molecule type" value="Genomic_DNA"/>
</dbReference>
<dbReference type="SMR" id="P29652"/>
<dbReference type="UniPathway" id="UPA00705"/>
<dbReference type="GO" id="GO:0005743">
    <property type="term" value="C:mitochondrial inner membrane"/>
    <property type="evidence" value="ECO:0007669"/>
    <property type="project" value="UniProtKB-SubCell"/>
</dbReference>
<dbReference type="GO" id="GO:0045277">
    <property type="term" value="C:respiratory chain complex IV"/>
    <property type="evidence" value="ECO:0000250"/>
    <property type="project" value="UniProtKB"/>
</dbReference>
<dbReference type="GO" id="GO:0004129">
    <property type="term" value="F:cytochrome-c oxidase activity"/>
    <property type="evidence" value="ECO:0007669"/>
    <property type="project" value="UniProtKB-EC"/>
</dbReference>
<dbReference type="GO" id="GO:0020037">
    <property type="term" value="F:heme binding"/>
    <property type="evidence" value="ECO:0007669"/>
    <property type="project" value="InterPro"/>
</dbReference>
<dbReference type="GO" id="GO:0046872">
    <property type="term" value="F:metal ion binding"/>
    <property type="evidence" value="ECO:0007669"/>
    <property type="project" value="UniProtKB-KW"/>
</dbReference>
<dbReference type="GO" id="GO:0015990">
    <property type="term" value="P:electron transport coupled proton transport"/>
    <property type="evidence" value="ECO:0007669"/>
    <property type="project" value="TreeGrafter"/>
</dbReference>
<dbReference type="GO" id="GO:0006123">
    <property type="term" value="P:mitochondrial electron transport, cytochrome c to oxygen"/>
    <property type="evidence" value="ECO:0007669"/>
    <property type="project" value="TreeGrafter"/>
</dbReference>
<dbReference type="FunFam" id="1.20.210.10:FF:000009">
    <property type="entry name" value="Cytochrome c oxidase subunit 1"/>
    <property type="match status" value="1"/>
</dbReference>
<dbReference type="Gene3D" id="1.20.210.10">
    <property type="entry name" value="Cytochrome c oxidase-like, subunit I domain"/>
    <property type="match status" value="1"/>
</dbReference>
<dbReference type="InterPro" id="IPR023616">
    <property type="entry name" value="Cyt_c_oxase-like_su1_dom"/>
</dbReference>
<dbReference type="InterPro" id="IPR036927">
    <property type="entry name" value="Cyt_c_oxase-like_su1_sf"/>
</dbReference>
<dbReference type="InterPro" id="IPR000883">
    <property type="entry name" value="Cyt_C_Oxase_1"/>
</dbReference>
<dbReference type="InterPro" id="IPR023615">
    <property type="entry name" value="Cyt_c_Oxase_su1_BS"/>
</dbReference>
<dbReference type="PANTHER" id="PTHR10422">
    <property type="entry name" value="CYTOCHROME C OXIDASE SUBUNIT 1"/>
    <property type="match status" value="1"/>
</dbReference>
<dbReference type="PANTHER" id="PTHR10422:SF18">
    <property type="entry name" value="CYTOCHROME C OXIDASE SUBUNIT 1"/>
    <property type="match status" value="1"/>
</dbReference>
<dbReference type="Pfam" id="PF00115">
    <property type="entry name" value="COX1"/>
    <property type="match status" value="1"/>
</dbReference>
<dbReference type="PRINTS" id="PR01165">
    <property type="entry name" value="CYCOXIDASEI"/>
</dbReference>
<dbReference type="SUPFAM" id="SSF81442">
    <property type="entry name" value="Cytochrome c oxidase subunit I-like"/>
    <property type="match status" value="1"/>
</dbReference>
<dbReference type="PROSITE" id="PS50855">
    <property type="entry name" value="COX1"/>
    <property type="match status" value="1"/>
</dbReference>
<dbReference type="PROSITE" id="PS00077">
    <property type="entry name" value="COX1_CUB"/>
    <property type="match status" value="1"/>
</dbReference>
<feature type="chain" id="PRO_0000183401" description="Cytochrome c oxidase subunit 1">
    <location>
        <begin position="1" status="less than"/>
        <end position="161" status="greater than"/>
    </location>
</feature>
<feature type="transmembrane region" description="Helical; Name=VI" evidence="2">
    <location>
        <begin position="1" status="less than"/>
        <end position="31"/>
    </location>
</feature>
<feature type="topological domain" description="Mitochondrial matrix" evidence="2">
    <location>
        <begin position="32"/>
        <end position="39"/>
    </location>
</feature>
<feature type="transmembrane region" description="Helical; Name=VII" evidence="2">
    <location>
        <begin position="40"/>
        <end position="56"/>
    </location>
</feature>
<feature type="topological domain" description="Mitochondrial intermembrane" evidence="2">
    <location>
        <begin position="57"/>
        <end position="68"/>
    </location>
</feature>
<feature type="transmembrane region" description="Helical; Name=VIII" evidence="2">
    <location>
        <begin position="69"/>
        <end position="97"/>
    </location>
</feature>
<feature type="topological domain" description="Mitochondrial matrix" evidence="2">
    <location>
        <begin position="98"/>
        <end position="105"/>
    </location>
</feature>
<feature type="transmembrane region" description="Helical; Name=IX" evidence="2">
    <location>
        <begin position="106"/>
        <end position="127"/>
    </location>
</feature>
<feature type="topological domain" description="Mitochondrial intermembrane" evidence="2">
    <location>
        <begin position="128"/>
        <end position="140"/>
    </location>
</feature>
<feature type="transmembrane region" description="Helical; Name=X" evidence="2">
    <location>
        <begin position="141"/>
        <end position="161" status="greater than"/>
    </location>
</feature>
<feature type="binding site" evidence="2">
    <location>
        <position position="10"/>
    </location>
    <ligand>
        <name>Cu cation</name>
        <dbReference type="ChEBI" id="CHEBI:23378"/>
        <label>B</label>
    </ligand>
</feature>
<feature type="binding site" evidence="2">
    <location>
        <position position="14"/>
    </location>
    <ligand>
        <name>O2</name>
        <dbReference type="ChEBI" id="CHEBI:15379"/>
    </ligand>
</feature>
<feature type="binding site" evidence="2">
    <location>
        <position position="60"/>
    </location>
    <ligand>
        <name>Cu cation</name>
        <dbReference type="ChEBI" id="CHEBI:23378"/>
        <label>B</label>
    </ligand>
</feature>
<feature type="binding site" evidence="2">
    <location>
        <position position="61"/>
    </location>
    <ligand>
        <name>Cu cation</name>
        <dbReference type="ChEBI" id="CHEBI:23378"/>
        <label>B</label>
    </ligand>
</feature>
<feature type="binding site" evidence="2">
    <location>
        <position position="138"/>
    </location>
    <ligand>
        <name>Mg(2+)</name>
        <dbReference type="ChEBI" id="CHEBI:18420"/>
        <note>ligand shared with MT-CO2</note>
    </ligand>
</feature>
<feature type="binding site" evidence="2">
    <location>
        <position position="139"/>
    </location>
    <ligand>
        <name>Mg(2+)</name>
        <dbReference type="ChEBI" id="CHEBI:18420"/>
        <note>ligand shared with MT-CO2</note>
    </ligand>
</feature>
<feature type="binding site" description="axial binding residue" evidence="2">
    <location>
        <position position="146"/>
    </location>
    <ligand>
        <name>heme a3</name>
        <dbReference type="ChEBI" id="CHEBI:83282"/>
        <note>high-spin</note>
    </ligand>
    <ligandPart>
        <name>Fe</name>
        <dbReference type="ChEBI" id="CHEBI:18248"/>
    </ligandPart>
</feature>
<feature type="binding site" description="axial binding residue" evidence="2">
    <location>
        <position position="148"/>
    </location>
    <ligand>
        <name>Fe(II)-heme a</name>
        <dbReference type="ChEBI" id="CHEBI:61715"/>
        <note>low-spin</note>
    </ligand>
    <ligandPart>
        <name>Fe</name>
        <dbReference type="ChEBI" id="CHEBI:18248"/>
    </ligandPart>
</feature>
<feature type="cross-link" description="1'-histidyl-3'-tyrosine (His-Tyr)" evidence="2">
    <location>
        <begin position="10"/>
        <end position="14"/>
    </location>
</feature>
<feature type="non-terminal residue">
    <location>
        <position position="1"/>
    </location>
</feature>
<feature type="non-terminal residue">
    <location>
        <position position="161"/>
    </location>
</feature>
<accession>P29652</accession>
<protein>
    <recommendedName>
        <fullName>Cytochrome c oxidase subunit 1</fullName>
        <ecNumber>7.1.1.9</ecNumber>
    </recommendedName>
    <alternativeName>
        <fullName>Cytochrome c oxidase polypeptide I</fullName>
    </alternativeName>
</protein>
<keyword id="KW-0186">Copper</keyword>
<keyword id="KW-0249">Electron transport</keyword>
<keyword id="KW-0349">Heme</keyword>
<keyword id="KW-0408">Iron</keyword>
<keyword id="KW-0460">Magnesium</keyword>
<keyword id="KW-0472">Membrane</keyword>
<keyword id="KW-0479">Metal-binding</keyword>
<keyword id="KW-0496">Mitochondrion</keyword>
<keyword id="KW-0999">Mitochondrion inner membrane</keyword>
<keyword id="KW-0679">Respiratory chain</keyword>
<keyword id="KW-0915">Sodium</keyword>
<keyword id="KW-1278">Translocase</keyword>
<keyword id="KW-0812">Transmembrane</keyword>
<keyword id="KW-1133">Transmembrane helix</keyword>
<keyword id="KW-0813">Transport</keyword>
<reference key="1">
    <citation type="journal article" date="1991" name="Mol. Biol. Evol.">
        <title>Phylogenetic relationships of neopterygian fishes, inferred from mitochondrial DNA sequences.</title>
        <authorList>
            <person name="Normark B.B."/>
            <person name="McCune A.R."/>
            <person name="Harrison R.G."/>
        </authorList>
    </citation>
    <scope>NUCLEOTIDE SEQUENCE [GENOMIC DNA]</scope>
</reference>
<gene>
    <name type="primary">mt-co1</name>
    <name type="synonym">coi</name>
    <name type="synonym">coxi</name>
    <name type="synonym">mtco1</name>
</gene>
<sequence length="161" mass="17991">YQHLFWFFGHPEVYILILPGFGMISHIVAYYSGKKEPFGYMGMVWAMMAIGLLGFIVWAHHMFTVGMDVDTRAYFTSATMIIAIPTGVKVFSWLATLHGASIKWETPLLWALGFIFLFTVGGLTGIVLANSSLDIVLHDTYYVVAHFHYVLSMGAVFAIVA</sequence>
<geneLocation type="mitochondrion"/>
<organism>
    <name type="scientific">Pomoxis nigromaculatus</name>
    <name type="common">Black crappie</name>
    <name type="synonym">Cantharus nigromaculatus</name>
    <dbReference type="NCBI Taxonomy" id="8182"/>
    <lineage>
        <taxon>Eukaryota</taxon>
        <taxon>Metazoa</taxon>
        <taxon>Chordata</taxon>
        <taxon>Craniata</taxon>
        <taxon>Vertebrata</taxon>
        <taxon>Euteleostomi</taxon>
        <taxon>Actinopterygii</taxon>
        <taxon>Neopterygii</taxon>
        <taxon>Teleostei</taxon>
        <taxon>Neoteleostei</taxon>
        <taxon>Acanthomorphata</taxon>
        <taxon>Eupercaria</taxon>
        <taxon>Centrarchiformes</taxon>
        <taxon>Centrarchoidei</taxon>
        <taxon>Centrarchidae</taxon>
        <taxon>Pomoxis</taxon>
    </lineage>
</organism>
<comment type="function">
    <text evidence="3">Component of the cytochrome c oxidase, the last enzyme in the mitochondrial electron transport chain which drives oxidative phosphorylation. The respiratory chain contains 3 multisubunit complexes succinate dehydrogenase (complex II, CII), ubiquinol-cytochrome c oxidoreductase (cytochrome b-c1 complex, complex III, CIII) and cytochrome c oxidase (complex IV, CIV), that cooperate to transfer electrons derived from NADH and succinate to molecular oxygen, creating an electrochemical gradient over the inner membrane that drives transmembrane transport and the ATP synthase. Cytochrome c oxidase is the component of the respiratory chain that catalyzes the reduction of oxygen to water. Electrons originating from reduced cytochrome c in the intermembrane space (IMS) are transferred via the dinuclear copper A center (CU(A)) of subunit 2 and heme A of subunit 1 to the active site in subunit 1, a binuclear center (BNC) formed by heme A3 and copper B (CU(B)). The BNC reduces molecular oxygen to 2 water molecules using 4 electrons from cytochrome c in the IMS and 4 protons from the mitochondrial matrix.</text>
</comment>
<comment type="catalytic activity">
    <reaction evidence="3">
        <text>4 Fe(II)-[cytochrome c] + O2 + 8 H(+)(in) = 4 Fe(III)-[cytochrome c] + 2 H2O + 4 H(+)(out)</text>
        <dbReference type="Rhea" id="RHEA:11436"/>
        <dbReference type="Rhea" id="RHEA-COMP:10350"/>
        <dbReference type="Rhea" id="RHEA-COMP:14399"/>
        <dbReference type="ChEBI" id="CHEBI:15377"/>
        <dbReference type="ChEBI" id="CHEBI:15378"/>
        <dbReference type="ChEBI" id="CHEBI:15379"/>
        <dbReference type="ChEBI" id="CHEBI:29033"/>
        <dbReference type="ChEBI" id="CHEBI:29034"/>
        <dbReference type="EC" id="7.1.1.9"/>
    </reaction>
    <physiologicalReaction direction="left-to-right" evidence="3">
        <dbReference type="Rhea" id="RHEA:11437"/>
    </physiologicalReaction>
</comment>
<comment type="cofactor">
    <cofactor evidence="2">
        <name>heme</name>
        <dbReference type="ChEBI" id="CHEBI:30413"/>
    </cofactor>
    <text evidence="2">Binds 2 heme A groups non-covalently per subunit.</text>
</comment>
<comment type="cofactor">
    <cofactor evidence="2">
        <name>Cu cation</name>
        <dbReference type="ChEBI" id="CHEBI:23378"/>
    </cofactor>
    <text evidence="2">Binds a copper B center.</text>
</comment>
<comment type="pathway">
    <text evidence="3">Energy metabolism; oxidative phosphorylation.</text>
</comment>
<comment type="subunit">
    <text evidence="1 2">Component of the cytochrome c oxidase (complex IV, CIV), a multisubunit enzyme composed of 14 subunits. The complex is composed of a catalytic core of 3 subunits MT-CO1, MT-CO2 and MT-CO3, encoded in the mitochondrial DNA, and 11 supernumerary subunits COX4I, COX5A, COX5B, COX6A, COX6B, COX6C, COX7A, COX7B, COX7C, COX8 and NDUFA4, which are encoded in the nuclear genome. The complex exists as a monomer or a dimer and forms supercomplexes (SCs) in the inner mitochondrial membrane with NADH-ubiquinone oxidoreductase (complex I, CI) and ubiquinol-cytochrome c oxidoreductase (cytochrome b-c1 complex, complex III, CIII), resulting in different assemblies (supercomplex SCI(1)III(2)IV(1) and megacomplex MCI(2)III(2)IV(2)) (By similarity). As a newly synthesized protein, rapidly incorporates into a multi-subunit assembly intermediate in the inner membrane, called MITRAC (mitochondrial translation regulation assembly intermediate of cytochrome c oxidase) complex, whose core components are COA3/MITRAC12 and COX14. Within the MITRAC complex, interacts with COA3 and with SMIM20/MITRAC7; the interaction with SMIM20 stabilizes the newly synthesized MT-CO1 and prevents its premature turnover. Interacts with TMEM177 in a COX20-dependent manner (By similarity).</text>
</comment>
<comment type="subcellular location">
    <subcellularLocation>
        <location evidence="2">Mitochondrion inner membrane</location>
        <topology evidence="2">Multi-pass membrane protein</topology>
    </subcellularLocation>
</comment>
<comment type="similarity">
    <text evidence="4">Belongs to the heme-copper respiratory oxidase family.</text>
</comment>
<evidence type="ECO:0000250" key="1">
    <source>
        <dbReference type="UniProtKB" id="P00395"/>
    </source>
</evidence>
<evidence type="ECO:0000250" key="2">
    <source>
        <dbReference type="UniProtKB" id="P00396"/>
    </source>
</evidence>
<evidence type="ECO:0000250" key="3">
    <source>
        <dbReference type="UniProtKB" id="P00401"/>
    </source>
</evidence>
<evidence type="ECO:0000305" key="4"/>
<name>COX1_POMNI</name>